<gene>
    <name evidence="1" type="primary">tatA</name>
    <name type="ordered locus">Mchl_3708</name>
</gene>
<comment type="function">
    <text evidence="1">Part of the twin-arginine translocation (Tat) system that transports large folded proteins containing a characteristic twin-arginine motif in their signal peptide across membranes. TatA could form the protein-conducting channel of the Tat system.</text>
</comment>
<comment type="subunit">
    <text evidence="1">The Tat system comprises two distinct complexes: a TatABC complex, containing multiple copies of TatA, TatB and TatC subunits, and a separate TatA complex, containing only TatA subunits. Substrates initially bind to the TatABC complex, which probably triggers association of the separate TatA complex to form the active translocon.</text>
</comment>
<comment type="subcellular location">
    <subcellularLocation>
        <location evidence="1">Cell inner membrane</location>
        <topology evidence="1">Single-pass membrane protein</topology>
    </subcellularLocation>
</comment>
<comment type="similarity">
    <text evidence="1">Belongs to the TatA/E family.</text>
</comment>
<feature type="chain" id="PRO_1000197877" description="Sec-independent protein translocase protein TatA">
    <location>
        <begin position="1"/>
        <end position="95"/>
    </location>
</feature>
<feature type="transmembrane region" description="Helical" evidence="1">
    <location>
        <begin position="1"/>
        <end position="21"/>
    </location>
</feature>
<feature type="region of interest" description="Disordered" evidence="2">
    <location>
        <begin position="42"/>
        <end position="95"/>
    </location>
</feature>
<sequence length="95" mass="9969">MGSMSVWHWVIVAVVVMLLFGRGKVSELMGDVAKGIKAFKKGMADDETQPNTATSVPPVGPNDPVRTLPHQGAPGTAPQPPHVQPHVSAGDHKAV</sequence>
<protein>
    <recommendedName>
        <fullName evidence="1">Sec-independent protein translocase protein TatA</fullName>
    </recommendedName>
</protein>
<accession>B7KX02</accession>
<reference key="1">
    <citation type="submission" date="2008-12" db="EMBL/GenBank/DDBJ databases">
        <title>Complete sequence of chromosome of Methylobacterium chloromethanicum CM4.</title>
        <authorList>
            <consortium name="US DOE Joint Genome Institute"/>
            <person name="Lucas S."/>
            <person name="Copeland A."/>
            <person name="Lapidus A."/>
            <person name="Glavina del Rio T."/>
            <person name="Dalin E."/>
            <person name="Tice H."/>
            <person name="Bruce D."/>
            <person name="Goodwin L."/>
            <person name="Pitluck S."/>
            <person name="Chertkov O."/>
            <person name="Brettin T."/>
            <person name="Detter J.C."/>
            <person name="Han C."/>
            <person name="Larimer F."/>
            <person name="Land M."/>
            <person name="Hauser L."/>
            <person name="Kyrpides N."/>
            <person name="Mikhailova N."/>
            <person name="Marx C."/>
            <person name="Richardson P."/>
        </authorList>
    </citation>
    <scope>NUCLEOTIDE SEQUENCE [LARGE SCALE GENOMIC DNA]</scope>
    <source>
        <strain>CM4 / NCIMB 13688</strain>
    </source>
</reference>
<organism>
    <name type="scientific">Methylorubrum extorquens (strain CM4 / NCIMB 13688)</name>
    <name type="common">Methylobacterium extorquens</name>
    <dbReference type="NCBI Taxonomy" id="440085"/>
    <lineage>
        <taxon>Bacteria</taxon>
        <taxon>Pseudomonadati</taxon>
        <taxon>Pseudomonadota</taxon>
        <taxon>Alphaproteobacteria</taxon>
        <taxon>Hyphomicrobiales</taxon>
        <taxon>Methylobacteriaceae</taxon>
        <taxon>Methylorubrum</taxon>
    </lineage>
</organism>
<evidence type="ECO:0000255" key="1">
    <source>
        <dbReference type="HAMAP-Rule" id="MF_00236"/>
    </source>
</evidence>
<evidence type="ECO:0000256" key="2">
    <source>
        <dbReference type="SAM" id="MobiDB-lite"/>
    </source>
</evidence>
<proteinExistence type="inferred from homology"/>
<dbReference type="EMBL" id="CP001298">
    <property type="protein sequence ID" value="ACK84527.1"/>
    <property type="molecule type" value="Genomic_DNA"/>
</dbReference>
<dbReference type="RefSeq" id="WP_003605994.1">
    <property type="nucleotide sequence ID" value="NC_011757.1"/>
</dbReference>
<dbReference type="SMR" id="B7KX02"/>
<dbReference type="GeneID" id="72991040"/>
<dbReference type="KEGG" id="mch:Mchl_3708"/>
<dbReference type="HOGENOM" id="CLU_086034_5_0_5"/>
<dbReference type="Proteomes" id="UP000002385">
    <property type="component" value="Chromosome"/>
</dbReference>
<dbReference type="GO" id="GO:0033281">
    <property type="term" value="C:TAT protein transport complex"/>
    <property type="evidence" value="ECO:0007669"/>
    <property type="project" value="UniProtKB-UniRule"/>
</dbReference>
<dbReference type="GO" id="GO:0008320">
    <property type="term" value="F:protein transmembrane transporter activity"/>
    <property type="evidence" value="ECO:0007669"/>
    <property type="project" value="UniProtKB-UniRule"/>
</dbReference>
<dbReference type="GO" id="GO:0043953">
    <property type="term" value="P:protein transport by the Tat complex"/>
    <property type="evidence" value="ECO:0007669"/>
    <property type="project" value="UniProtKB-UniRule"/>
</dbReference>
<dbReference type="Gene3D" id="1.20.5.3310">
    <property type="match status" value="1"/>
</dbReference>
<dbReference type="HAMAP" id="MF_00236">
    <property type="entry name" value="TatA_E"/>
    <property type="match status" value="1"/>
</dbReference>
<dbReference type="InterPro" id="IPR003369">
    <property type="entry name" value="TatA/B/E"/>
</dbReference>
<dbReference type="InterPro" id="IPR006312">
    <property type="entry name" value="TatA/E"/>
</dbReference>
<dbReference type="NCBIfam" id="NF001940">
    <property type="entry name" value="PRK00720.1"/>
    <property type="match status" value="1"/>
</dbReference>
<dbReference type="NCBIfam" id="TIGR01411">
    <property type="entry name" value="tatAE"/>
    <property type="match status" value="1"/>
</dbReference>
<dbReference type="PANTHER" id="PTHR42982">
    <property type="entry name" value="SEC-INDEPENDENT PROTEIN TRANSLOCASE PROTEIN TATA"/>
    <property type="match status" value="1"/>
</dbReference>
<dbReference type="PANTHER" id="PTHR42982:SF1">
    <property type="entry name" value="SEC-INDEPENDENT PROTEIN TRANSLOCASE PROTEIN TATA"/>
    <property type="match status" value="1"/>
</dbReference>
<dbReference type="Pfam" id="PF02416">
    <property type="entry name" value="TatA_B_E"/>
    <property type="match status" value="1"/>
</dbReference>
<name>TATA_METC4</name>
<keyword id="KW-0997">Cell inner membrane</keyword>
<keyword id="KW-1003">Cell membrane</keyword>
<keyword id="KW-0472">Membrane</keyword>
<keyword id="KW-0653">Protein transport</keyword>
<keyword id="KW-0811">Translocation</keyword>
<keyword id="KW-0812">Transmembrane</keyword>
<keyword id="KW-1133">Transmembrane helix</keyword>
<keyword id="KW-0813">Transport</keyword>